<sequence>SVGFKAGVKEYKLTYYTPEYQTKDTDILAAFRVTPQPGVPPEEAGAAVRAESSTGTWTTVWTDGLTSLDRYKGRCYHXEAVLGEEDQYIAYVAYPLDLFEEGSVTNMFTSIVGNVFGFKALRALRLEDLRIPNAYIKTFQGPPHGIQVERDKLNKYGRPLLGCTIKPKLGLSAKNYGRAVYECLRGGLDFTKDDENVNSQPFMRWRDRFLFCAEAIYKAQAETGEIKGHYLNATAGTCEEMIKRAVFARELGVPIVMHDYLTGGFTANTSLAHYCRDNGLLLHIHRAMHAVIDRQKNHGMHFRVLAKALRLSGGDHIHAGTVVGKLEGERDITLGFVDLLRDDFIEKDRSRGIYFTQDWVSLPGVXPVASGGIHVWHMPALTEIFGDDXRXQFGGGTLGHPWGNAPGAVANRVALEACVKARNEGRDLAVEGNEIIREASKWSPELAAACEVWKEIRFNFKAVDTLDPS</sequence>
<reference key="1">
    <citation type="journal article" date="1995" name="Ann. Mo. Bot. Gard.">
        <title>Subfamilial and tribal relationships in the Rubiaceae based on rbcL sequence data.</title>
        <authorList>
            <person name="Bremer B."/>
            <person name="Andreasen K."/>
            <person name="Olsson D."/>
        </authorList>
    </citation>
    <scope>NUCLEOTIDE SEQUENCE [GENOMIC DNA]</scope>
</reference>
<evidence type="ECO:0000255" key="1">
    <source>
        <dbReference type="HAMAP-Rule" id="MF_01338"/>
    </source>
</evidence>
<organism>
    <name type="scientific">Antirhea lucida</name>
    <name type="common">Palo iloron</name>
    <name type="synonym">Stenostomum lucidum</name>
    <dbReference type="NCBI Taxonomy" id="43446"/>
    <lineage>
        <taxon>Eukaryota</taxon>
        <taxon>Viridiplantae</taxon>
        <taxon>Streptophyta</taxon>
        <taxon>Embryophyta</taxon>
        <taxon>Tracheophyta</taxon>
        <taxon>Spermatophyta</taxon>
        <taxon>Magnoliopsida</taxon>
        <taxon>eudicotyledons</taxon>
        <taxon>Gunneridae</taxon>
        <taxon>Pentapetalae</taxon>
        <taxon>asterids</taxon>
        <taxon>lamiids</taxon>
        <taxon>Gentianales</taxon>
        <taxon>Rubiaceae</taxon>
        <taxon>Cinchonoideae</taxon>
        <taxon>Guettardeae</taxon>
        <taxon>Stenostomum</taxon>
    </lineage>
</organism>
<proteinExistence type="inferred from homology"/>
<feature type="chain" id="PRO_0000062353" description="Ribulose bisphosphate carboxylase large chain">
    <location>
        <begin position="1" status="less than"/>
        <end position="469"/>
    </location>
</feature>
<feature type="active site" description="Proton acceptor" evidence="1">
    <location>
        <position position="166"/>
    </location>
</feature>
<feature type="active site" description="Proton acceptor" evidence="1">
    <location>
        <position position="285"/>
    </location>
</feature>
<feature type="binding site" description="in homodimeric partner" evidence="1">
    <location>
        <position position="114"/>
    </location>
    <ligand>
        <name>substrate</name>
    </ligand>
</feature>
<feature type="binding site" evidence="1">
    <location>
        <position position="164"/>
    </location>
    <ligand>
        <name>substrate</name>
    </ligand>
</feature>
<feature type="binding site" evidence="1">
    <location>
        <position position="168"/>
    </location>
    <ligand>
        <name>substrate</name>
    </ligand>
</feature>
<feature type="binding site" description="via carbamate group" evidence="1">
    <location>
        <position position="192"/>
    </location>
    <ligand>
        <name>Mg(2+)</name>
        <dbReference type="ChEBI" id="CHEBI:18420"/>
    </ligand>
</feature>
<feature type="binding site" evidence="1">
    <location>
        <position position="194"/>
    </location>
    <ligand>
        <name>Mg(2+)</name>
        <dbReference type="ChEBI" id="CHEBI:18420"/>
    </ligand>
</feature>
<feature type="binding site" evidence="1">
    <location>
        <position position="195"/>
    </location>
    <ligand>
        <name>Mg(2+)</name>
        <dbReference type="ChEBI" id="CHEBI:18420"/>
    </ligand>
</feature>
<feature type="binding site" evidence="1">
    <location>
        <position position="286"/>
    </location>
    <ligand>
        <name>substrate</name>
    </ligand>
</feature>
<feature type="binding site" evidence="1">
    <location>
        <position position="318"/>
    </location>
    <ligand>
        <name>substrate</name>
    </ligand>
</feature>
<feature type="binding site" evidence="1">
    <location>
        <position position="370"/>
    </location>
    <ligand>
        <name>substrate</name>
    </ligand>
</feature>
<feature type="site" description="Transition state stabilizer" evidence="1">
    <location>
        <position position="325"/>
    </location>
</feature>
<feature type="modified residue" description="N6,N6,N6-trimethyllysine" evidence="1">
    <location>
        <position position="5"/>
    </location>
</feature>
<feature type="modified residue" description="N6-carboxylysine" evidence="1">
    <location>
        <position position="192"/>
    </location>
</feature>
<feature type="disulfide bond" description="Interchain; in linked form" evidence="1">
    <location>
        <position position="238"/>
    </location>
</feature>
<feature type="non-terminal residue">
    <location>
        <position position="1"/>
    </location>
</feature>
<protein>
    <recommendedName>
        <fullName evidence="1">Ribulose bisphosphate carboxylase large chain</fullName>
        <shortName evidence="1">RuBisCO large subunit</shortName>
        <ecNumber evidence="1">4.1.1.39</ecNumber>
    </recommendedName>
</protein>
<keyword id="KW-0113">Calvin cycle</keyword>
<keyword id="KW-0120">Carbon dioxide fixation</keyword>
<keyword id="KW-0150">Chloroplast</keyword>
<keyword id="KW-1015">Disulfide bond</keyword>
<keyword id="KW-0456">Lyase</keyword>
<keyword id="KW-0460">Magnesium</keyword>
<keyword id="KW-0479">Metal-binding</keyword>
<keyword id="KW-0488">Methylation</keyword>
<keyword id="KW-0503">Monooxygenase</keyword>
<keyword id="KW-0560">Oxidoreductase</keyword>
<keyword id="KW-0601">Photorespiration</keyword>
<keyword id="KW-0602">Photosynthesis</keyword>
<keyword id="KW-0934">Plastid</keyword>
<accession>Q31672</accession>
<name>RBL_ANTLU</name>
<comment type="function">
    <text evidence="1">RuBisCO catalyzes two reactions: the carboxylation of D-ribulose 1,5-bisphosphate, the primary event in carbon dioxide fixation, as well as the oxidative fragmentation of the pentose substrate in the photorespiration process. Both reactions occur simultaneously and in competition at the same active site.</text>
</comment>
<comment type="catalytic activity">
    <reaction evidence="1">
        <text>2 (2R)-3-phosphoglycerate + 2 H(+) = D-ribulose 1,5-bisphosphate + CO2 + H2O</text>
        <dbReference type="Rhea" id="RHEA:23124"/>
        <dbReference type="ChEBI" id="CHEBI:15377"/>
        <dbReference type="ChEBI" id="CHEBI:15378"/>
        <dbReference type="ChEBI" id="CHEBI:16526"/>
        <dbReference type="ChEBI" id="CHEBI:57870"/>
        <dbReference type="ChEBI" id="CHEBI:58272"/>
        <dbReference type="EC" id="4.1.1.39"/>
    </reaction>
</comment>
<comment type="catalytic activity">
    <reaction evidence="1">
        <text>D-ribulose 1,5-bisphosphate + O2 = 2-phosphoglycolate + (2R)-3-phosphoglycerate + 2 H(+)</text>
        <dbReference type="Rhea" id="RHEA:36631"/>
        <dbReference type="ChEBI" id="CHEBI:15378"/>
        <dbReference type="ChEBI" id="CHEBI:15379"/>
        <dbReference type="ChEBI" id="CHEBI:57870"/>
        <dbReference type="ChEBI" id="CHEBI:58033"/>
        <dbReference type="ChEBI" id="CHEBI:58272"/>
    </reaction>
</comment>
<comment type="cofactor">
    <cofactor evidence="1">
        <name>Mg(2+)</name>
        <dbReference type="ChEBI" id="CHEBI:18420"/>
    </cofactor>
    <text evidence="1">Binds 1 Mg(2+) ion per subunit.</text>
</comment>
<comment type="subunit">
    <text evidence="1">Heterohexadecamer of 8 large chains and 8 small chains; disulfide-linked. The disulfide link is formed within the large subunit homodimers.</text>
</comment>
<comment type="subcellular location">
    <subcellularLocation>
        <location>Plastid</location>
        <location>Chloroplast</location>
    </subcellularLocation>
</comment>
<comment type="PTM">
    <text evidence="1">The disulfide bond which can form in the large chain dimeric partners within the hexadecamer appears to be associated with oxidative stress and protein turnover.</text>
</comment>
<comment type="miscellaneous">
    <text evidence="1">The basic functional RuBisCO is composed of a large chain homodimer in a 'head-to-tail' conformation. In form I RuBisCO this homodimer is arranged in a barrel-like tetramer with the small subunits forming a tetrameric 'cap' on each end of the 'barrel'.</text>
</comment>
<comment type="similarity">
    <text evidence="1">Belongs to the RuBisCO large chain family. Type I subfamily.</text>
</comment>
<geneLocation type="chloroplast"/>
<gene>
    <name evidence="1" type="primary">rbcL</name>
</gene>
<dbReference type="EC" id="4.1.1.39" evidence="1"/>
<dbReference type="EMBL" id="X83624">
    <property type="protein sequence ID" value="CAA58603.1"/>
    <property type="molecule type" value="Genomic_DNA"/>
</dbReference>
<dbReference type="GO" id="GO:0009507">
    <property type="term" value="C:chloroplast"/>
    <property type="evidence" value="ECO:0007669"/>
    <property type="project" value="UniProtKB-SubCell"/>
</dbReference>
<dbReference type="GO" id="GO:0000287">
    <property type="term" value="F:magnesium ion binding"/>
    <property type="evidence" value="ECO:0007669"/>
    <property type="project" value="InterPro"/>
</dbReference>
<dbReference type="GO" id="GO:0004497">
    <property type="term" value="F:monooxygenase activity"/>
    <property type="evidence" value="ECO:0007669"/>
    <property type="project" value="UniProtKB-KW"/>
</dbReference>
<dbReference type="GO" id="GO:0016984">
    <property type="term" value="F:ribulose-bisphosphate carboxylase activity"/>
    <property type="evidence" value="ECO:0007669"/>
    <property type="project" value="UniProtKB-EC"/>
</dbReference>
<dbReference type="GO" id="GO:0009853">
    <property type="term" value="P:photorespiration"/>
    <property type="evidence" value="ECO:0007669"/>
    <property type="project" value="UniProtKB-KW"/>
</dbReference>
<dbReference type="GO" id="GO:0019253">
    <property type="term" value="P:reductive pentose-phosphate cycle"/>
    <property type="evidence" value="ECO:0007669"/>
    <property type="project" value="UniProtKB-KW"/>
</dbReference>
<dbReference type="CDD" id="cd08212">
    <property type="entry name" value="RuBisCO_large_I"/>
    <property type="match status" value="1"/>
</dbReference>
<dbReference type="FunFam" id="3.20.20.110:FF:000001">
    <property type="entry name" value="Ribulose bisphosphate carboxylase large chain"/>
    <property type="match status" value="1"/>
</dbReference>
<dbReference type="FunFam" id="3.30.70.150:FF:000001">
    <property type="entry name" value="Ribulose bisphosphate carboxylase large chain"/>
    <property type="match status" value="1"/>
</dbReference>
<dbReference type="Gene3D" id="3.20.20.110">
    <property type="entry name" value="Ribulose bisphosphate carboxylase, large subunit, C-terminal domain"/>
    <property type="match status" value="1"/>
</dbReference>
<dbReference type="Gene3D" id="3.30.70.150">
    <property type="entry name" value="RuBisCO large subunit, N-terminal domain"/>
    <property type="match status" value="1"/>
</dbReference>
<dbReference type="HAMAP" id="MF_01338">
    <property type="entry name" value="RuBisCO_L_type1"/>
    <property type="match status" value="1"/>
</dbReference>
<dbReference type="InterPro" id="IPR033966">
    <property type="entry name" value="RuBisCO"/>
</dbReference>
<dbReference type="InterPro" id="IPR020878">
    <property type="entry name" value="RuBisCo_large_chain_AS"/>
</dbReference>
<dbReference type="InterPro" id="IPR000685">
    <property type="entry name" value="RuBisCO_lsu_C"/>
</dbReference>
<dbReference type="InterPro" id="IPR036376">
    <property type="entry name" value="RuBisCO_lsu_C_sf"/>
</dbReference>
<dbReference type="InterPro" id="IPR017443">
    <property type="entry name" value="RuBisCO_lsu_fd_N"/>
</dbReference>
<dbReference type="InterPro" id="IPR036422">
    <property type="entry name" value="RuBisCO_lsu_N_sf"/>
</dbReference>
<dbReference type="InterPro" id="IPR020888">
    <property type="entry name" value="RuBisCO_lsuI"/>
</dbReference>
<dbReference type="NCBIfam" id="NF003252">
    <property type="entry name" value="PRK04208.1"/>
    <property type="match status" value="1"/>
</dbReference>
<dbReference type="PANTHER" id="PTHR42704">
    <property type="entry name" value="RIBULOSE BISPHOSPHATE CARBOXYLASE"/>
    <property type="match status" value="1"/>
</dbReference>
<dbReference type="PANTHER" id="PTHR42704:SF15">
    <property type="entry name" value="RIBULOSE BISPHOSPHATE CARBOXYLASE LARGE CHAIN"/>
    <property type="match status" value="1"/>
</dbReference>
<dbReference type="Pfam" id="PF00016">
    <property type="entry name" value="RuBisCO_large"/>
    <property type="match status" value="1"/>
</dbReference>
<dbReference type="Pfam" id="PF02788">
    <property type="entry name" value="RuBisCO_large_N"/>
    <property type="match status" value="1"/>
</dbReference>
<dbReference type="SFLD" id="SFLDG01052">
    <property type="entry name" value="RuBisCO"/>
    <property type="match status" value="1"/>
</dbReference>
<dbReference type="SFLD" id="SFLDS00014">
    <property type="entry name" value="RuBisCO"/>
    <property type="match status" value="1"/>
</dbReference>
<dbReference type="SFLD" id="SFLDG00301">
    <property type="entry name" value="RuBisCO-like_proteins"/>
    <property type="match status" value="1"/>
</dbReference>
<dbReference type="SUPFAM" id="SSF51649">
    <property type="entry name" value="RuBisCo, C-terminal domain"/>
    <property type="match status" value="1"/>
</dbReference>
<dbReference type="SUPFAM" id="SSF54966">
    <property type="entry name" value="RuBisCO, large subunit, small (N-terminal) domain"/>
    <property type="match status" value="1"/>
</dbReference>
<dbReference type="PROSITE" id="PS00157">
    <property type="entry name" value="RUBISCO_LARGE"/>
    <property type="match status" value="1"/>
</dbReference>